<proteinExistence type="inferred from homology"/>
<protein>
    <recommendedName>
        <fullName evidence="1">Phospho-N-acetylmuramoyl-pentapeptide-transferase</fullName>
        <ecNumber evidence="1">2.7.8.13</ecNumber>
    </recommendedName>
    <alternativeName>
        <fullName evidence="1">UDP-MurNAc-pentapeptide phosphotransferase</fullName>
    </alternativeName>
</protein>
<dbReference type="EC" id="2.7.8.13" evidence="1"/>
<dbReference type="EMBL" id="AP010656">
    <property type="protein sequence ID" value="BAG84001.1"/>
    <property type="molecule type" value="Genomic_DNA"/>
</dbReference>
<dbReference type="RefSeq" id="WP_012573757.1">
    <property type="nucleotide sequence ID" value="NC_011565.1"/>
</dbReference>
<dbReference type="SMR" id="B6YS29"/>
<dbReference type="STRING" id="511995.CFPG_738"/>
<dbReference type="KEGG" id="aps:CFPG_738"/>
<dbReference type="eggNOG" id="COG0472">
    <property type="taxonomic scope" value="Bacteria"/>
</dbReference>
<dbReference type="HOGENOM" id="CLU_023982_0_0_10"/>
<dbReference type="OrthoDB" id="9805475at2"/>
<dbReference type="UniPathway" id="UPA00219"/>
<dbReference type="Proteomes" id="UP000000723">
    <property type="component" value="Chromosome"/>
</dbReference>
<dbReference type="GO" id="GO:0005886">
    <property type="term" value="C:plasma membrane"/>
    <property type="evidence" value="ECO:0007669"/>
    <property type="project" value="UniProtKB-SubCell"/>
</dbReference>
<dbReference type="GO" id="GO:0046872">
    <property type="term" value="F:metal ion binding"/>
    <property type="evidence" value="ECO:0007669"/>
    <property type="project" value="UniProtKB-KW"/>
</dbReference>
<dbReference type="GO" id="GO:0008963">
    <property type="term" value="F:phospho-N-acetylmuramoyl-pentapeptide-transferase activity"/>
    <property type="evidence" value="ECO:0007669"/>
    <property type="project" value="UniProtKB-UniRule"/>
</dbReference>
<dbReference type="GO" id="GO:0051992">
    <property type="term" value="F:UDP-N-acetylmuramoyl-L-alanyl-D-glutamyl-meso-2,6-diaminopimelyl-D-alanyl-D-alanine:undecaprenyl-phosphate transferase activity"/>
    <property type="evidence" value="ECO:0007669"/>
    <property type="project" value="RHEA"/>
</dbReference>
<dbReference type="GO" id="GO:0051301">
    <property type="term" value="P:cell division"/>
    <property type="evidence" value="ECO:0007669"/>
    <property type="project" value="UniProtKB-KW"/>
</dbReference>
<dbReference type="GO" id="GO:0071555">
    <property type="term" value="P:cell wall organization"/>
    <property type="evidence" value="ECO:0007669"/>
    <property type="project" value="UniProtKB-KW"/>
</dbReference>
<dbReference type="GO" id="GO:0009252">
    <property type="term" value="P:peptidoglycan biosynthetic process"/>
    <property type="evidence" value="ECO:0007669"/>
    <property type="project" value="UniProtKB-UniRule"/>
</dbReference>
<dbReference type="GO" id="GO:0008360">
    <property type="term" value="P:regulation of cell shape"/>
    <property type="evidence" value="ECO:0007669"/>
    <property type="project" value="UniProtKB-KW"/>
</dbReference>
<dbReference type="CDD" id="cd06852">
    <property type="entry name" value="GT_MraY"/>
    <property type="match status" value="1"/>
</dbReference>
<dbReference type="HAMAP" id="MF_00038">
    <property type="entry name" value="MraY"/>
    <property type="match status" value="1"/>
</dbReference>
<dbReference type="InterPro" id="IPR000715">
    <property type="entry name" value="Glycosyl_transferase_4"/>
</dbReference>
<dbReference type="InterPro" id="IPR003524">
    <property type="entry name" value="PNAcMuramoyl-5peptid_Trfase"/>
</dbReference>
<dbReference type="InterPro" id="IPR018480">
    <property type="entry name" value="PNAcMuramoyl-5peptid_Trfase_CS"/>
</dbReference>
<dbReference type="NCBIfam" id="TIGR00445">
    <property type="entry name" value="mraY"/>
    <property type="match status" value="1"/>
</dbReference>
<dbReference type="PANTHER" id="PTHR22926">
    <property type="entry name" value="PHOSPHO-N-ACETYLMURAMOYL-PENTAPEPTIDE-TRANSFERASE"/>
    <property type="match status" value="1"/>
</dbReference>
<dbReference type="PANTHER" id="PTHR22926:SF5">
    <property type="entry name" value="PHOSPHO-N-ACETYLMURAMOYL-PENTAPEPTIDE-TRANSFERASE HOMOLOG"/>
    <property type="match status" value="1"/>
</dbReference>
<dbReference type="Pfam" id="PF00953">
    <property type="entry name" value="Glycos_transf_4"/>
    <property type="match status" value="1"/>
</dbReference>
<dbReference type="Pfam" id="PF10555">
    <property type="entry name" value="MraY_sig1"/>
    <property type="match status" value="1"/>
</dbReference>
<dbReference type="PROSITE" id="PS01347">
    <property type="entry name" value="MRAY_1"/>
    <property type="match status" value="1"/>
</dbReference>
<dbReference type="PROSITE" id="PS01348">
    <property type="entry name" value="MRAY_2"/>
    <property type="match status" value="1"/>
</dbReference>
<reference key="1">
    <citation type="journal article" date="2008" name="Science">
        <title>Genome of an endosymbiont coupling N2 fixation to cellulolysis within RT protist cells in termite gut.</title>
        <authorList>
            <person name="Hongoh Y."/>
            <person name="Sharma V.K."/>
            <person name="Prakash T."/>
            <person name="Noda S."/>
            <person name="Toh H."/>
            <person name="Taylor T.D."/>
            <person name="Kudo T."/>
            <person name="Sakaki Y."/>
            <person name="Toyoda A."/>
            <person name="Hattori M."/>
            <person name="Ohkuma M."/>
        </authorList>
    </citation>
    <scope>NUCLEOTIDE SEQUENCE [LARGE SCALE GENOMIC DNA]</scope>
</reference>
<name>MRAY_AZOPC</name>
<evidence type="ECO:0000255" key="1">
    <source>
        <dbReference type="HAMAP-Rule" id="MF_00038"/>
    </source>
</evidence>
<comment type="function">
    <text evidence="1">Catalyzes the initial step of the lipid cycle reactions in the biosynthesis of the cell wall peptidoglycan: transfers peptidoglycan precursor phospho-MurNAc-pentapeptide from UDP-MurNAc-pentapeptide onto the lipid carrier undecaprenyl phosphate, yielding undecaprenyl-pyrophosphoryl-MurNAc-pentapeptide, known as lipid I.</text>
</comment>
<comment type="catalytic activity">
    <reaction evidence="1">
        <text>UDP-N-acetyl-alpha-D-muramoyl-L-alanyl-gamma-D-glutamyl-meso-2,6-diaminopimeloyl-D-alanyl-D-alanine + di-trans,octa-cis-undecaprenyl phosphate = di-trans,octa-cis-undecaprenyl diphospho-N-acetyl-alpha-D-muramoyl-L-alanyl-D-glutamyl-meso-2,6-diaminopimeloyl-D-alanyl-D-alanine + UMP</text>
        <dbReference type="Rhea" id="RHEA:28386"/>
        <dbReference type="ChEBI" id="CHEBI:57865"/>
        <dbReference type="ChEBI" id="CHEBI:60392"/>
        <dbReference type="ChEBI" id="CHEBI:61386"/>
        <dbReference type="ChEBI" id="CHEBI:61387"/>
        <dbReference type="EC" id="2.7.8.13"/>
    </reaction>
</comment>
<comment type="cofactor">
    <cofactor evidence="1">
        <name>Mg(2+)</name>
        <dbReference type="ChEBI" id="CHEBI:18420"/>
    </cofactor>
</comment>
<comment type="pathway">
    <text evidence="1">Cell wall biogenesis; peptidoglycan biosynthesis.</text>
</comment>
<comment type="subcellular location">
    <subcellularLocation>
        <location evidence="1">Cell inner membrane</location>
        <topology evidence="1">Multi-pass membrane protein</topology>
    </subcellularLocation>
</comment>
<comment type="similarity">
    <text evidence="1">Belongs to the glycosyltransferase 4 family. MraY subfamily.</text>
</comment>
<organism>
    <name type="scientific">Azobacteroides pseudotrichonymphae genomovar. CFP2</name>
    <dbReference type="NCBI Taxonomy" id="511995"/>
    <lineage>
        <taxon>Bacteria</taxon>
        <taxon>Pseudomonadati</taxon>
        <taxon>Bacteroidota</taxon>
        <taxon>Bacteroidia</taxon>
        <taxon>Bacteroidales</taxon>
        <taxon>Candidatus Azobacteroides</taxon>
    </lineage>
</organism>
<keyword id="KW-0131">Cell cycle</keyword>
<keyword id="KW-0132">Cell division</keyword>
<keyword id="KW-0997">Cell inner membrane</keyword>
<keyword id="KW-1003">Cell membrane</keyword>
<keyword id="KW-0133">Cell shape</keyword>
<keyword id="KW-0961">Cell wall biogenesis/degradation</keyword>
<keyword id="KW-0460">Magnesium</keyword>
<keyword id="KW-0472">Membrane</keyword>
<keyword id="KW-0479">Metal-binding</keyword>
<keyword id="KW-0573">Peptidoglycan synthesis</keyword>
<keyword id="KW-1185">Reference proteome</keyword>
<keyword id="KW-0808">Transferase</keyword>
<keyword id="KW-0812">Transmembrane</keyword>
<keyword id="KW-1133">Transmembrane helix</keyword>
<feature type="chain" id="PRO_1000090590" description="Phospho-N-acetylmuramoyl-pentapeptide-transferase">
    <location>
        <begin position="1"/>
        <end position="418"/>
    </location>
</feature>
<feature type="transmembrane region" description="Helical" evidence="1">
    <location>
        <begin position="22"/>
        <end position="42"/>
    </location>
</feature>
<feature type="transmembrane region" description="Helical" evidence="1">
    <location>
        <begin position="72"/>
        <end position="92"/>
    </location>
</feature>
<feature type="transmembrane region" description="Helical" evidence="1">
    <location>
        <begin position="95"/>
        <end position="115"/>
    </location>
</feature>
<feature type="transmembrane region" description="Helical" evidence="1">
    <location>
        <begin position="135"/>
        <end position="155"/>
    </location>
</feature>
<feature type="transmembrane region" description="Helical" evidence="1">
    <location>
        <begin position="208"/>
        <end position="228"/>
    </location>
</feature>
<feature type="transmembrane region" description="Helical" evidence="1">
    <location>
        <begin position="244"/>
        <end position="264"/>
    </location>
</feature>
<feature type="transmembrane region" description="Helical" evidence="1">
    <location>
        <begin position="277"/>
        <end position="297"/>
    </location>
</feature>
<feature type="transmembrane region" description="Helical" evidence="1">
    <location>
        <begin position="302"/>
        <end position="322"/>
    </location>
</feature>
<feature type="transmembrane region" description="Helical" evidence="1">
    <location>
        <begin position="326"/>
        <end position="346"/>
    </location>
</feature>
<feature type="transmembrane region" description="Helical" evidence="1">
    <location>
        <begin position="395"/>
        <end position="415"/>
    </location>
</feature>
<gene>
    <name evidence="1" type="primary">mraY</name>
    <name type="ordered locus">CFPG_738</name>
</gene>
<accession>B6YS29</accession>
<sequence length="418" mass="46028">MLYSLFYFLSSLNVPGARLFRYISFRSVLSFSLSLIISVLIGERIIRFLQRHQAGETIRNLGLEGQIQKKGTPTMGGIIIIIAILIPVLLLARLSNIYVLLMLITTIWLGILGLIDDCIKVIWKHKEGLSGKIKIIAQVGLGLIVGLIVYLSPNIVMYENVEIRQQGGRKTVSYTPPLKSTQTTVPFFKNNNLDYRDLTAFMTNHRTAATWILFVLITVFIVTAVSNGANLTDGLDGLTAGSSAIIGVVLGILAYVSANLGFAAYLNIMYIPGCGELTVFASAFVGACMGFLWHNAFPAQVFMGDIGSLTLGGIIAVFAIIIHKELLLPMLCGIFFTESLSVMIQVAYFKYSKRKTGMGKRIFKMTPIHHHFQKGGSEEVNVIIQKPLNAIPESKIVVRFWLIGILLAALTVVTLKIR</sequence>